<protein>
    <recommendedName>
        <fullName>Neuron navigator 3</fullName>
    </recommendedName>
</protein>
<reference key="1">
    <citation type="journal article" date="2013" name="Nature">
        <title>The zebrafish reference genome sequence and its relationship to the human genome.</title>
        <authorList>
            <person name="Howe K."/>
            <person name="Clark M.D."/>
            <person name="Torroja C.F."/>
            <person name="Torrance J."/>
            <person name="Berthelot C."/>
            <person name="Muffato M."/>
            <person name="Collins J.E."/>
            <person name="Humphray S."/>
            <person name="McLaren K."/>
            <person name="Matthews L."/>
            <person name="McLaren S."/>
            <person name="Sealy I."/>
            <person name="Caccamo M."/>
            <person name="Churcher C."/>
            <person name="Scott C."/>
            <person name="Barrett J.C."/>
            <person name="Koch R."/>
            <person name="Rauch G.J."/>
            <person name="White S."/>
            <person name="Chow W."/>
            <person name="Kilian B."/>
            <person name="Quintais L.T."/>
            <person name="Guerra-Assuncao J.A."/>
            <person name="Zhou Y."/>
            <person name="Gu Y."/>
            <person name="Yen J."/>
            <person name="Vogel J.H."/>
            <person name="Eyre T."/>
            <person name="Redmond S."/>
            <person name="Banerjee R."/>
            <person name="Chi J."/>
            <person name="Fu B."/>
            <person name="Langley E."/>
            <person name="Maguire S.F."/>
            <person name="Laird G.K."/>
            <person name="Lloyd D."/>
            <person name="Kenyon E."/>
            <person name="Donaldson S."/>
            <person name="Sehra H."/>
            <person name="Almeida-King J."/>
            <person name="Loveland J."/>
            <person name="Trevanion S."/>
            <person name="Jones M."/>
            <person name="Quail M."/>
            <person name="Willey D."/>
            <person name="Hunt A."/>
            <person name="Burton J."/>
            <person name="Sims S."/>
            <person name="McLay K."/>
            <person name="Plumb B."/>
            <person name="Davis J."/>
            <person name="Clee C."/>
            <person name="Oliver K."/>
            <person name="Clark R."/>
            <person name="Riddle C."/>
            <person name="Elliot D."/>
            <person name="Threadgold G."/>
            <person name="Harden G."/>
            <person name="Ware D."/>
            <person name="Begum S."/>
            <person name="Mortimore B."/>
            <person name="Kerry G."/>
            <person name="Heath P."/>
            <person name="Phillimore B."/>
            <person name="Tracey A."/>
            <person name="Corby N."/>
            <person name="Dunn M."/>
            <person name="Johnson C."/>
            <person name="Wood J."/>
            <person name="Clark S."/>
            <person name="Pelan S."/>
            <person name="Griffiths G."/>
            <person name="Smith M."/>
            <person name="Glithero R."/>
            <person name="Howden P."/>
            <person name="Barker N."/>
            <person name="Lloyd C."/>
            <person name="Stevens C."/>
            <person name="Harley J."/>
            <person name="Holt K."/>
            <person name="Panagiotidis G."/>
            <person name="Lovell J."/>
            <person name="Beasley H."/>
            <person name="Henderson C."/>
            <person name="Gordon D."/>
            <person name="Auger K."/>
            <person name="Wright D."/>
            <person name="Collins J."/>
            <person name="Raisen C."/>
            <person name="Dyer L."/>
            <person name="Leung K."/>
            <person name="Robertson L."/>
            <person name="Ambridge K."/>
            <person name="Leongamornlert D."/>
            <person name="McGuire S."/>
            <person name="Gilderthorp R."/>
            <person name="Griffiths C."/>
            <person name="Manthravadi D."/>
            <person name="Nichol S."/>
            <person name="Barker G."/>
            <person name="Whitehead S."/>
            <person name="Kay M."/>
            <person name="Brown J."/>
            <person name="Murnane C."/>
            <person name="Gray E."/>
            <person name="Humphries M."/>
            <person name="Sycamore N."/>
            <person name="Barker D."/>
            <person name="Saunders D."/>
            <person name="Wallis J."/>
            <person name="Babbage A."/>
            <person name="Hammond S."/>
            <person name="Mashreghi-Mohammadi M."/>
            <person name="Barr L."/>
            <person name="Martin S."/>
            <person name="Wray P."/>
            <person name="Ellington A."/>
            <person name="Matthews N."/>
            <person name="Ellwood M."/>
            <person name="Woodmansey R."/>
            <person name="Clark G."/>
            <person name="Cooper J."/>
            <person name="Tromans A."/>
            <person name="Grafham D."/>
            <person name="Skuce C."/>
            <person name="Pandian R."/>
            <person name="Andrews R."/>
            <person name="Harrison E."/>
            <person name="Kimberley A."/>
            <person name="Garnett J."/>
            <person name="Fosker N."/>
            <person name="Hall R."/>
            <person name="Garner P."/>
            <person name="Kelly D."/>
            <person name="Bird C."/>
            <person name="Palmer S."/>
            <person name="Gehring I."/>
            <person name="Berger A."/>
            <person name="Dooley C.M."/>
            <person name="Ersan-Urun Z."/>
            <person name="Eser C."/>
            <person name="Geiger H."/>
            <person name="Geisler M."/>
            <person name="Karotki L."/>
            <person name="Kirn A."/>
            <person name="Konantz J."/>
            <person name="Konantz M."/>
            <person name="Oberlander M."/>
            <person name="Rudolph-Geiger S."/>
            <person name="Teucke M."/>
            <person name="Lanz C."/>
            <person name="Raddatz G."/>
            <person name="Osoegawa K."/>
            <person name="Zhu B."/>
            <person name="Rapp A."/>
            <person name="Widaa S."/>
            <person name="Langford C."/>
            <person name="Yang F."/>
            <person name="Schuster S.C."/>
            <person name="Carter N.P."/>
            <person name="Harrow J."/>
            <person name="Ning Z."/>
            <person name="Herrero J."/>
            <person name="Searle S.M."/>
            <person name="Enright A."/>
            <person name="Geisler R."/>
            <person name="Plasterk R.H."/>
            <person name="Lee C."/>
            <person name="Westerfield M."/>
            <person name="de Jong P.J."/>
            <person name="Zon L.I."/>
            <person name="Postlethwait J.H."/>
            <person name="Nusslein-Volhard C."/>
            <person name="Hubbard T.J."/>
            <person name="Roest Crollius H."/>
            <person name="Rogers J."/>
            <person name="Stemple D.L."/>
        </authorList>
    </citation>
    <scope>NUCLEOTIDE SEQUENCE [LARGE SCALE GENOMIC DNA]</scope>
    <source>
        <strain>Tuebingen</strain>
    </source>
</reference>
<reference key="2">
    <citation type="journal article" date="2011" name="Development">
        <title>Neuron navigator 3a regulates liver organogenesis during zebrafish embryogenesis.</title>
        <authorList>
            <person name="Klein C."/>
            <person name="Mikutta J."/>
            <person name="Krueger J."/>
            <person name="Scholz K."/>
            <person name="Brinkmann J."/>
            <person name="Liu D."/>
            <person name="Veerkamp J."/>
            <person name="Siegel D."/>
            <person name="Abdelilah-Seyfried S."/>
            <person name="le Noble F."/>
        </authorList>
    </citation>
    <scope>FUNCTION</scope>
    <scope>SUBCELLULAR LOCATION</scope>
    <scope>INTERACTION WITH F-ACTIN</scope>
    <scope>DEVELOPMENTAL STAGE</scope>
    <scope>DISRUPTION PHENOTYPE</scope>
</reference>
<reference key="3">
    <citation type="journal article" date="2022" name="Fish Physiol. Biochem.">
        <title>Neuron navigator 3 (NAV3) is required for heart development in zebrafish.</title>
        <authorList>
            <person name="Lv F."/>
            <person name="Ge X."/>
            <person name="Qian P."/>
            <person name="Lu X."/>
            <person name="Liu D."/>
            <person name="Chen C."/>
        </authorList>
    </citation>
    <scope>FUNCTION</scope>
    <scope>DEVELOPMENTAL STAGE</scope>
    <scope>DISRUPTION PHENOTYPE</scope>
</reference>
<organism>
    <name type="scientific">Danio rerio</name>
    <name type="common">Zebrafish</name>
    <name type="synonym">Brachydanio rerio</name>
    <dbReference type="NCBI Taxonomy" id="7955"/>
    <lineage>
        <taxon>Eukaryota</taxon>
        <taxon>Metazoa</taxon>
        <taxon>Chordata</taxon>
        <taxon>Craniata</taxon>
        <taxon>Vertebrata</taxon>
        <taxon>Euteleostomi</taxon>
        <taxon>Actinopterygii</taxon>
        <taxon>Neopterygii</taxon>
        <taxon>Teleostei</taxon>
        <taxon>Ostariophysi</taxon>
        <taxon>Cypriniformes</taxon>
        <taxon>Danionidae</taxon>
        <taxon>Danioninae</taxon>
        <taxon>Danio</taxon>
    </lineage>
</organism>
<dbReference type="EMBL" id="BX537169">
    <property type="protein sequence ID" value="CAH69140.1"/>
    <property type="molecule type" value="Genomic_DNA"/>
</dbReference>
<dbReference type="EMBL" id="BX511172">
    <property type="protein sequence ID" value="CAH69140.1"/>
    <property type="status" value="JOINED"/>
    <property type="molecule type" value="Genomic_DNA"/>
</dbReference>
<dbReference type="EMBL" id="BX511172">
    <property type="protein sequence ID" value="CAI20640.1"/>
    <property type="molecule type" value="Genomic_DNA"/>
</dbReference>
<dbReference type="EMBL" id="BX537169">
    <property type="protein sequence ID" value="CAI20640.1"/>
    <property type="status" value="JOINED"/>
    <property type="molecule type" value="Genomic_DNA"/>
</dbReference>
<dbReference type="RefSeq" id="NP_001038608.1">
    <property type="nucleotide sequence ID" value="NM_001045143.2"/>
</dbReference>
<dbReference type="SMR" id="Q5TZ18"/>
<dbReference type="FunCoup" id="Q5TZ18">
    <property type="interactions" value="693"/>
</dbReference>
<dbReference type="STRING" id="7955.ENSDARP00000021413"/>
<dbReference type="PaxDb" id="7955-ENSDARP00000098329"/>
<dbReference type="Ensembl" id="ENSDART00000005847">
    <property type="protein sequence ID" value="ENSDARP00000021413"/>
    <property type="gene ID" value="ENSDARG00000005476"/>
</dbReference>
<dbReference type="GeneID" id="567779"/>
<dbReference type="KEGG" id="dre:567779"/>
<dbReference type="AGR" id="ZFIN:ZDB-GENE-021205-1"/>
<dbReference type="CTD" id="89795"/>
<dbReference type="ZFIN" id="ZDB-GENE-021205-1">
    <property type="gene designation" value="nav3"/>
</dbReference>
<dbReference type="eggNOG" id="ENOG502QPT3">
    <property type="taxonomic scope" value="Eukaryota"/>
</dbReference>
<dbReference type="HOGENOM" id="CLU_001002_1_1_1"/>
<dbReference type="InParanoid" id="Q5TZ18"/>
<dbReference type="OMA" id="TKYPEDP"/>
<dbReference type="OrthoDB" id="2161974at2759"/>
<dbReference type="PhylomeDB" id="Q5TZ18"/>
<dbReference type="TreeFam" id="TF329881"/>
<dbReference type="PRO" id="PR:Q5TZ18"/>
<dbReference type="Proteomes" id="UP000000437">
    <property type="component" value="Chromosome 4"/>
</dbReference>
<dbReference type="Bgee" id="ENSDARG00000005476">
    <property type="expression patterns" value="Expressed in cranial skeletal system and 42 other cell types or tissues"/>
</dbReference>
<dbReference type="ExpressionAtlas" id="Q5TZ18">
    <property type="expression patterns" value="baseline and differential"/>
</dbReference>
<dbReference type="GO" id="GO:0030175">
    <property type="term" value="C:filopodium"/>
    <property type="evidence" value="ECO:0000314"/>
    <property type="project" value="ZFIN"/>
</dbReference>
<dbReference type="GO" id="GO:0005794">
    <property type="term" value="C:Golgi apparatus"/>
    <property type="evidence" value="ECO:0000314"/>
    <property type="project" value="ZFIN"/>
</dbReference>
<dbReference type="GO" id="GO:0030027">
    <property type="term" value="C:lamellipodium"/>
    <property type="evidence" value="ECO:0000314"/>
    <property type="project" value="ZFIN"/>
</dbReference>
<dbReference type="GO" id="GO:0005640">
    <property type="term" value="C:nuclear outer membrane"/>
    <property type="evidence" value="ECO:0007669"/>
    <property type="project" value="UniProtKB-SubCell"/>
</dbReference>
<dbReference type="GO" id="GO:0003779">
    <property type="term" value="F:actin binding"/>
    <property type="evidence" value="ECO:0000314"/>
    <property type="project" value="ZFIN"/>
</dbReference>
<dbReference type="GO" id="GO:0005524">
    <property type="term" value="F:ATP binding"/>
    <property type="evidence" value="ECO:0007669"/>
    <property type="project" value="InterPro"/>
</dbReference>
<dbReference type="GO" id="GO:0016887">
    <property type="term" value="F:ATP hydrolysis activity"/>
    <property type="evidence" value="ECO:0007669"/>
    <property type="project" value="InterPro"/>
</dbReference>
<dbReference type="GO" id="GO:0072576">
    <property type="term" value="P:liver morphogenesis"/>
    <property type="evidence" value="ECO:0000315"/>
    <property type="project" value="ZFIN"/>
</dbReference>
<dbReference type="GO" id="GO:0022008">
    <property type="term" value="P:neurogenesis"/>
    <property type="evidence" value="ECO:0007669"/>
    <property type="project" value="InterPro"/>
</dbReference>
<dbReference type="GO" id="GO:0031016">
    <property type="term" value="P:pancreas development"/>
    <property type="evidence" value="ECO:0000315"/>
    <property type="project" value="ZFIN"/>
</dbReference>
<dbReference type="CDD" id="cd21286">
    <property type="entry name" value="CH_NAV3"/>
    <property type="match status" value="1"/>
</dbReference>
<dbReference type="FunFam" id="1.10.418.10:FF:000018">
    <property type="entry name" value="Neuron navigator 2"/>
    <property type="match status" value="1"/>
</dbReference>
<dbReference type="FunFam" id="3.40.50.300:FF:000316">
    <property type="entry name" value="Putative neuron navigator 3"/>
    <property type="match status" value="1"/>
</dbReference>
<dbReference type="Gene3D" id="1.10.418.10">
    <property type="entry name" value="Calponin-like domain"/>
    <property type="match status" value="1"/>
</dbReference>
<dbReference type="Gene3D" id="3.40.50.300">
    <property type="entry name" value="P-loop containing nucleotide triphosphate hydrolases"/>
    <property type="match status" value="1"/>
</dbReference>
<dbReference type="InterPro" id="IPR003593">
    <property type="entry name" value="AAA+_ATPase"/>
</dbReference>
<dbReference type="InterPro" id="IPR003959">
    <property type="entry name" value="ATPase_AAA_core"/>
</dbReference>
<dbReference type="InterPro" id="IPR001715">
    <property type="entry name" value="CH_dom"/>
</dbReference>
<dbReference type="InterPro" id="IPR036872">
    <property type="entry name" value="CH_dom_sf"/>
</dbReference>
<dbReference type="InterPro" id="IPR039041">
    <property type="entry name" value="Nav/unc-53"/>
</dbReference>
<dbReference type="InterPro" id="IPR027417">
    <property type="entry name" value="P-loop_NTPase"/>
</dbReference>
<dbReference type="PANTHER" id="PTHR12784:SF18">
    <property type="entry name" value="NEURON NAVIGATOR 3"/>
    <property type="match status" value="1"/>
</dbReference>
<dbReference type="PANTHER" id="PTHR12784">
    <property type="entry name" value="STEERIN"/>
    <property type="match status" value="1"/>
</dbReference>
<dbReference type="Pfam" id="PF00004">
    <property type="entry name" value="AAA"/>
    <property type="match status" value="1"/>
</dbReference>
<dbReference type="Pfam" id="PF25408">
    <property type="entry name" value="AAA_lid_NAV1"/>
    <property type="match status" value="1"/>
</dbReference>
<dbReference type="Pfam" id="PF00307">
    <property type="entry name" value="CH"/>
    <property type="match status" value="1"/>
</dbReference>
<dbReference type="Pfam" id="PF23092">
    <property type="entry name" value="Ubiquitin_6"/>
    <property type="match status" value="1"/>
</dbReference>
<dbReference type="SMART" id="SM00382">
    <property type="entry name" value="AAA"/>
    <property type="match status" value="1"/>
</dbReference>
<dbReference type="SMART" id="SM00033">
    <property type="entry name" value="CH"/>
    <property type="match status" value="1"/>
</dbReference>
<dbReference type="SUPFAM" id="SSF47576">
    <property type="entry name" value="Calponin-homology domain, CH-domain"/>
    <property type="match status" value="1"/>
</dbReference>
<dbReference type="SUPFAM" id="SSF52540">
    <property type="entry name" value="P-loop containing nucleoside triphosphate hydrolases"/>
    <property type="match status" value="2"/>
</dbReference>
<dbReference type="PROSITE" id="PS50021">
    <property type="entry name" value="CH"/>
    <property type="match status" value="1"/>
</dbReference>
<feature type="chain" id="PRO_0000286978" description="Neuron navigator 3">
    <location>
        <begin position="1"/>
        <end position="2269"/>
    </location>
</feature>
<feature type="domain" description="Calponin-homology (CH)" evidence="3">
    <location>
        <begin position="55"/>
        <end position="162"/>
    </location>
</feature>
<feature type="region of interest" description="Disordered" evidence="4">
    <location>
        <begin position="186"/>
        <end position="358"/>
    </location>
</feature>
<feature type="region of interest" description="Disordered" evidence="4">
    <location>
        <begin position="388"/>
        <end position="532"/>
    </location>
</feature>
<feature type="region of interest" description="Disordered" evidence="4">
    <location>
        <begin position="692"/>
        <end position="737"/>
    </location>
</feature>
<feature type="region of interest" description="Disordered" evidence="4">
    <location>
        <begin position="756"/>
        <end position="776"/>
    </location>
</feature>
<feature type="region of interest" description="Disordered" evidence="4">
    <location>
        <begin position="836"/>
        <end position="1036"/>
    </location>
</feature>
<feature type="region of interest" description="Disordered" evidence="4">
    <location>
        <begin position="1050"/>
        <end position="1079"/>
    </location>
</feature>
<feature type="region of interest" description="Disordered" evidence="4">
    <location>
        <begin position="1097"/>
        <end position="1412"/>
    </location>
</feature>
<feature type="region of interest" description="Disordered" evidence="4">
    <location>
        <begin position="1461"/>
        <end position="1487"/>
    </location>
</feature>
<feature type="region of interest" description="Disordered" evidence="4">
    <location>
        <begin position="1602"/>
        <end position="1672"/>
    </location>
</feature>
<feature type="region of interest" description="Disordered" evidence="4">
    <location>
        <begin position="1756"/>
        <end position="1792"/>
    </location>
</feature>
<feature type="region of interest" description="Disordered" evidence="4">
    <location>
        <begin position="2207"/>
        <end position="2269"/>
    </location>
</feature>
<feature type="coiled-coil region" evidence="2">
    <location>
        <begin position="644"/>
        <end position="672"/>
    </location>
</feature>
<feature type="coiled-coil region" evidence="2">
    <location>
        <begin position="1499"/>
        <end position="1586"/>
    </location>
</feature>
<feature type="coiled-coil region" evidence="2">
    <location>
        <begin position="1697"/>
        <end position="1765"/>
    </location>
</feature>
<feature type="compositionally biased region" description="Polar residues" evidence="4">
    <location>
        <begin position="186"/>
        <end position="207"/>
    </location>
</feature>
<feature type="compositionally biased region" description="Low complexity" evidence="4">
    <location>
        <begin position="236"/>
        <end position="252"/>
    </location>
</feature>
<feature type="compositionally biased region" description="Polar residues" evidence="4">
    <location>
        <begin position="267"/>
        <end position="291"/>
    </location>
</feature>
<feature type="compositionally biased region" description="Polar residues" evidence="4">
    <location>
        <begin position="305"/>
        <end position="319"/>
    </location>
</feature>
<feature type="compositionally biased region" description="Pro residues" evidence="4">
    <location>
        <begin position="323"/>
        <end position="333"/>
    </location>
</feature>
<feature type="compositionally biased region" description="Polar residues" evidence="4">
    <location>
        <begin position="346"/>
        <end position="356"/>
    </location>
</feature>
<feature type="compositionally biased region" description="Low complexity" evidence="4">
    <location>
        <begin position="411"/>
        <end position="432"/>
    </location>
</feature>
<feature type="compositionally biased region" description="Polar residues" evidence="4">
    <location>
        <begin position="505"/>
        <end position="518"/>
    </location>
</feature>
<feature type="compositionally biased region" description="Polar residues" evidence="4">
    <location>
        <begin position="699"/>
        <end position="716"/>
    </location>
</feature>
<feature type="compositionally biased region" description="Polar residues" evidence="4">
    <location>
        <begin position="727"/>
        <end position="737"/>
    </location>
</feature>
<feature type="compositionally biased region" description="Low complexity" evidence="4">
    <location>
        <begin position="847"/>
        <end position="860"/>
    </location>
</feature>
<feature type="compositionally biased region" description="Polar residues" evidence="4">
    <location>
        <begin position="874"/>
        <end position="886"/>
    </location>
</feature>
<feature type="compositionally biased region" description="Low complexity" evidence="4">
    <location>
        <begin position="919"/>
        <end position="932"/>
    </location>
</feature>
<feature type="compositionally biased region" description="Polar residues" evidence="4">
    <location>
        <begin position="939"/>
        <end position="950"/>
    </location>
</feature>
<feature type="compositionally biased region" description="Basic and acidic residues" evidence="4">
    <location>
        <begin position="977"/>
        <end position="989"/>
    </location>
</feature>
<feature type="compositionally biased region" description="Low complexity" evidence="4">
    <location>
        <begin position="1110"/>
        <end position="1137"/>
    </location>
</feature>
<feature type="compositionally biased region" description="Polar residues" evidence="4">
    <location>
        <begin position="1163"/>
        <end position="1172"/>
    </location>
</feature>
<feature type="compositionally biased region" description="Low complexity" evidence="4">
    <location>
        <begin position="1185"/>
        <end position="1202"/>
    </location>
</feature>
<feature type="compositionally biased region" description="Low complexity" evidence="4">
    <location>
        <begin position="1223"/>
        <end position="1234"/>
    </location>
</feature>
<feature type="compositionally biased region" description="Gly residues" evidence="4">
    <location>
        <begin position="1266"/>
        <end position="1276"/>
    </location>
</feature>
<feature type="compositionally biased region" description="Low complexity" evidence="4">
    <location>
        <begin position="1292"/>
        <end position="1305"/>
    </location>
</feature>
<feature type="compositionally biased region" description="Polar residues" evidence="4">
    <location>
        <begin position="1313"/>
        <end position="1339"/>
    </location>
</feature>
<feature type="compositionally biased region" description="Polar residues" evidence="4">
    <location>
        <begin position="1354"/>
        <end position="1363"/>
    </location>
</feature>
<feature type="compositionally biased region" description="Basic and acidic residues" evidence="4">
    <location>
        <begin position="1381"/>
        <end position="1391"/>
    </location>
</feature>
<feature type="compositionally biased region" description="Polar residues" evidence="4">
    <location>
        <begin position="1392"/>
        <end position="1412"/>
    </location>
</feature>
<feature type="compositionally biased region" description="Low complexity" evidence="4">
    <location>
        <begin position="1605"/>
        <end position="1623"/>
    </location>
</feature>
<feature type="compositionally biased region" description="Low complexity" evidence="4">
    <location>
        <begin position="1765"/>
        <end position="1792"/>
    </location>
</feature>
<feature type="compositionally biased region" description="Polar residues" evidence="4">
    <location>
        <begin position="2208"/>
        <end position="2224"/>
    </location>
</feature>
<name>NAV3_DANRE</name>
<evidence type="ECO:0000250" key="1">
    <source>
        <dbReference type="UniProtKB" id="Q80TN7"/>
    </source>
</evidence>
<evidence type="ECO:0000255" key="2"/>
<evidence type="ECO:0000255" key="3">
    <source>
        <dbReference type="PROSITE-ProRule" id="PRU00044"/>
    </source>
</evidence>
<evidence type="ECO:0000256" key="4">
    <source>
        <dbReference type="SAM" id="MobiDB-lite"/>
    </source>
</evidence>
<evidence type="ECO:0000269" key="5">
    <source>
    </source>
</evidence>
<evidence type="ECO:0000269" key="6">
    <source>
    </source>
</evidence>
<evidence type="ECO:0000305" key="7"/>
<sequence length="2269" mass="242554">MAHGLAPRSSELRVTESPMLSCQLSFKTEIHDRRTNLVPAPAATLARSSREAEESKICKIYTDWANHYLAKSGCPRLIKDLTQDIPDGVLLAEIIQIIANEKIEDINSCPKSHSQMIENVECCLSFLGARGVSVQGLSAEEVCNGNLKSILGLFFILSRYKQQQQHQQQYLQSLVELQQHVTHQTTGAAQLSQHKTQDMQSSLTARYTSPPGHSGIAAPQKKNTRLPGPSRVPAAGSGSNSSKGSSNLNRRSQSFNSIDKSKPLQYASGNDRGSMNGSGSVPSSTSGQQLASAIPSPTAGKTWRSKSMNMKHSATSSMLATKPPSPTSSPTPPSSSDRLRPPITDASKSAPGNQRSMLEKFRILNPRATSRTSPSVAEMALQEEDDLSEFGDEGTFSPTPPCGISKQQGKPSASAFAPPSKSNNCKNHNNKSLPQPKDKEDKNKTKNKASTPPKEEPVIVETSKKGSKIASLIPKGSKTSAASVKKESAIPASSSIPKPGLKAPTATSKPAGTQSCVPATTGGEKTKLNKGSQSIYMQRSLGGLENRKTSMVLSTSTSALSASTTSGLGGGCALGGNGAVQLPQQQQHNHPNTATVAPFMYRTYSENDCTTVVPPEPCLSPTKELVYGKTAKQCLEEISGEDPETRRMRTVKNIADLRQNLEETMSSLRGTQITHSTLETTFDTTVTTEVNGRGLPALSSRSSPMSWRLGQGSSPRLQAGDAPSYTPPRSSAGSTTVRYGEPSRLLYTAPLRRAAASGARGAEPGEKGGISEVGPEVDVTGYGSDGDILAKNVHADDISGYHTDGGIYSRNVDLYSRNVGRPAEMTPAREVVQKGVKEMQGEDSWDDSSSVSSGLSDTLDNISTDDLNPAPYSGISSRKSKAAQSNKETHRHIEQDASSWAGAEDLKKVDEEMEPGMDPSCKWKTSSPSSSCQGEDISQKTGLPMSQTGSWRRGMSAQVGITPPRTKGTSTSLKTPGKTDDAKASEKGKGSPKSPSIQRSPSDAGKSSGDEGKKPPSGIARPPTTSSFGYKKIPGPAGALITASGATLTSGSATLGKVPKSACIGKSTGISNGRKTSLDGAQHQDDAVLLGCGGSEVPLQYRSLPRPAKSSSGGSSVVSRSGHRSSSSSIDSNVSGKSAGGSGVAVGTPTSTKRRDTGKVGSGRSSPVTINQTDKEKVAGSDQEGTGLPTSPKSSPTSTQSGLRQPGSKYPDIASPTFRRLFGSKASSKPSSPGTPDSGKCPSALGSPHGTLARQASLDSPSSGTGSLGSMGGQSGGSSPLYGKTPDLGTDSPASSPASGLSLPSNARPWPPNLSSSSAGSKDTLSCHSMTSLHTSSESIDLPLPHHHGPKVTRTGSVKSTLSEGMPLDRNTLPKKGLRQTSHEEGKEWLRSHSTGGLQDTGSPLSPPGTTCANAGKYHYSNLLSPTSMSQYNIPSTSMSRSNSIPAQDSFELYGEGHPLGGSATSLEERPRGMSRSGSFRDSTDEVHGSSLSLVSSTSSLYSAQIRKLRRELDASQEKVATLTSQLAANAHLVAAFEKSLANMTCRLQSLTMTAEQKESELAELRETIEALKTQNTDAQTAIQVALNGPDHVHRDLRIRRQHSSESMSSINSAASHSSLGSAKDAEDKKKKKKSWLRSSFKQAFSKKKTNKPQSSHDEIEEMTDSSLPSSPKLLHISRQASSPQPLLSSPSTTELCECTEAEAEIILQLKNELREKELKLTDIRLEALSSAHHLDQIREAMNRMQNEIELLKAENDRLKSSGNTTPAATPAKTARPPSETSSTSSSSSRQSLGLSLNNLNITDTIMSDILLDDGYEGNLRKEGRSVRIVVTINSDSNKTKAMQKKQYLIGSIGVSGKTKWDVLDGVIRRLFKEYVFRVDPLTSLGMNSDSIVCYRMGDVVRSHASEVPELLPCGYLVGDNNVITVTLKGVKEGSIDDLVFDTLIPKPIIQRYLNLLMEHRRIILSGPSGTGKSYLATKLAYFILSKTGREVTDTNLATFNVDQKSSKDLRQYLSSLAEQCNTEECEIELPTVVILDNLHHIGSLSDIFNGFLNCKYHKCPYVIGTMNQGVSSSPNLELHHNFRWVLCANHTEPVKGFLGRFLRRKLIETEIDKNMRSNDLIKIIDWIPKIWQHLNSFLEAHSSSDVTIGPRLFLSCPMDADGSRVWFTDLWNYSLVPYLLEAVREGLQHEGQSLLQLRPEDVGYDGYSSSKDGAASKQVSQSDTEGDPLMNMLMRLQEAANYSSAQSCDSDSASHHEDLLDSSLESAL</sequence>
<comment type="function">
    <text evidence="1 5 6">Involved in liver and heart organogenesis during embryo development (PubMed:21471154, PubMed:35039994). Plays a role in the migration of hepatoblasts from the intestinal endoderm during liver organogenesis; possibly by modulating actin polymerization during hepatoblast outgrowth (PubMed:21471154). May be involved in neuron regeneration (By similarity).</text>
</comment>
<comment type="subunit">
    <text evidence="5">Interacts with F-actin.</text>
</comment>
<comment type="subcellular location">
    <subcellularLocation>
        <location evidence="1">Nucleus outer membrane</location>
    </subcellularLocation>
    <subcellularLocation>
        <location evidence="5">Golgi apparatus</location>
    </subcellularLocation>
    <subcellularLocation>
        <location evidence="5">Cell projection</location>
        <location evidence="5">Lamellipodium</location>
    </subcellularLocation>
    <subcellularLocation>
        <location evidence="5">Cell projection</location>
        <location evidence="5">Filopodium</location>
    </subcellularLocation>
    <text evidence="5">Localizes to the Golgi apparatus in quiescent cells (PubMed:21471154). Associated with lamellipodia and filipodia in migrating hepatic cells (PubMed:21471154).</text>
</comment>
<comment type="developmental stage">
    <text evidence="5 6">Expressed in brain and somites, and slight expression in cardiac primordium, at 18 hours post-fertilization (hpf) (PubMed:35039994). Expression is initiated at 22 hpf in the gut endoderm in an area known to be the origin of hepatic precursor cells and at 40 hpf, expands to the newly formed liver bud (PubMed:21471154). Expression is reduced after termination of primary liver formation (PubMed:21471154). Expressed in the brain, heart, and somites at 24 hpf (PubMed:35039994). Expression in somites becomes weaker, and is rarely detected from 48 hpf onwards (PubMed:35039994). Expressed in the cardiac region from 24 to 48 hpf (PubMed:35039994). At 48 hpf, expression is regionalized to the brain and heart (PubMed:21471154). At 96 hpf, almost no expression in heart, and expression is found to be accumulated in other tissues, such as the gill arch, swim bladder, and intestine (PubMed:35039994).</text>
</comment>
<comment type="disruption phenotype">
    <text evidence="5 6">Severe deficiency in cardiac morphology and structure and 70% embryonic lethality within 24 hpf (PubMed:35039994). Morpholino-mediated knockdown impairs the migration of hepatoblasts out from the gut endoderm, blocks liver bud formation, and results in a reduced liver size (PubMed:21471154). Also impairs development of pancreas and swim bladder (PubMed:21471154).</text>
</comment>
<comment type="similarity">
    <text evidence="7">Belongs to the Nav/unc-53 family.</text>
</comment>
<accession>Q5TZ18</accession>
<gene>
    <name type="primary">nav3</name>
    <name type="ORF">si:dkeyp-60g2.1</name>
</gene>
<proteinExistence type="evidence at protein level"/>
<keyword id="KW-0966">Cell projection</keyword>
<keyword id="KW-0175">Coiled coil</keyword>
<keyword id="KW-0333">Golgi apparatus</keyword>
<keyword id="KW-0472">Membrane</keyword>
<keyword id="KW-0539">Nucleus</keyword>
<keyword id="KW-1185">Reference proteome</keyword>